<gene>
    <name evidence="1" type="primary">matK</name>
</gene>
<comment type="function">
    <text evidence="1">Usually encoded in the trnK tRNA gene intron. Probably assists in splicing its own and other chloroplast group II introns.</text>
</comment>
<comment type="subcellular location">
    <subcellularLocation>
        <location>Plastid</location>
        <location>Chloroplast</location>
    </subcellularLocation>
</comment>
<comment type="similarity">
    <text evidence="1">Belongs to the intron maturase 2 family. MatK subfamily.</text>
</comment>
<keyword id="KW-0150">Chloroplast</keyword>
<keyword id="KW-0507">mRNA processing</keyword>
<keyword id="KW-0934">Plastid</keyword>
<keyword id="KW-0694">RNA-binding</keyword>
<keyword id="KW-0819">tRNA processing</keyword>
<accession>O78248</accession>
<reference key="1">
    <citation type="journal article" date="1998" name="Sci. Hortic.">
        <title>Phylogenetic analyses of the genus Rosa using the matK sequence: molecular evidence for the narrow genetic background of modern roses.</title>
        <authorList>
            <person name="Matsumoto S."/>
            <person name="Kouchi M."/>
            <person name="Yabuki J."/>
            <person name="Kusunoki M."/>
            <person name="Ueda Y."/>
            <person name="Fukui H."/>
        </authorList>
    </citation>
    <scope>NUCLEOTIDE SEQUENCE [GENOMIC DNA]</scope>
    <source>
        <strain>cv. bicolor Jacq. Willmott</strain>
        <tissue>Leaf</tissue>
    </source>
</reference>
<sequence>MEEFQGYLELDRSQQHDFLYPLIFREYIYALAHDRGLNRSVLLDNVSYDKKSSLLIIKRLISRMYQQNHFIISVNDSNQNKFFGYNKNLYSQMISEGFAVIVEIPFSLRLVSSLEETETVKSYNLRSIHSIFPFFEDKFPHLNYASDVLIPYPIHLEILVQTLRYCVKDPSSLHLLRLFLHEYYNWNTLITPKKSIFAKSNQRLFLLLYNSYVCEYESILLFLRNQSNHLRLTSSGILFERIRFYEKIKYPVEEVFANDFPATLWFFKDPFIQYVRYQGKSILASKDTPLLMNKWKYYLVHFWQCHFYVWSQPGRIHINQLSKHSFDFLGYLSSIRPNISVVRSQLLENSFLMDNAMKKLDTLFPIIPMIGSLAKVKFCNTSGHPISKSSWADSSDSDIIDRFVRIGENLSHYYSGSSKKKSLYRIKYILRLSCVKTLARKHKSTVRTFLKRLGPKLLDEFFTEEEQIFSLLFPRTSSTLKRFYRGRIWYLDILCINDLVNHE</sequence>
<evidence type="ECO:0000255" key="1">
    <source>
        <dbReference type="HAMAP-Rule" id="MF_01390"/>
    </source>
</evidence>
<organism>
    <name type="scientific">Rosa foetida</name>
    <name type="common">Austrian briar</name>
    <name type="synonym">Yellow Austrian rose</name>
    <dbReference type="NCBI Taxonomy" id="74629"/>
    <lineage>
        <taxon>Eukaryota</taxon>
        <taxon>Viridiplantae</taxon>
        <taxon>Streptophyta</taxon>
        <taxon>Embryophyta</taxon>
        <taxon>Tracheophyta</taxon>
        <taxon>Spermatophyta</taxon>
        <taxon>Magnoliopsida</taxon>
        <taxon>eudicotyledons</taxon>
        <taxon>Gunneridae</taxon>
        <taxon>Pentapetalae</taxon>
        <taxon>rosids</taxon>
        <taxon>fabids</taxon>
        <taxon>Rosales</taxon>
        <taxon>Rosaceae</taxon>
        <taxon>Rosoideae</taxon>
        <taxon>Rosoideae incertae sedis</taxon>
        <taxon>Rosa</taxon>
    </lineage>
</organism>
<protein>
    <recommendedName>
        <fullName evidence="1">Maturase K</fullName>
    </recommendedName>
    <alternativeName>
        <fullName evidence="1">Intron maturase</fullName>
    </alternativeName>
</protein>
<feature type="chain" id="PRO_0000143688" description="Maturase K">
    <location>
        <begin position="1"/>
        <end position="503"/>
    </location>
</feature>
<dbReference type="EMBL" id="AB011975">
    <property type="protein sequence ID" value="BAA32750.1"/>
    <property type="molecule type" value="Genomic_DNA"/>
</dbReference>
<dbReference type="GO" id="GO:0009507">
    <property type="term" value="C:chloroplast"/>
    <property type="evidence" value="ECO:0007669"/>
    <property type="project" value="UniProtKB-SubCell"/>
</dbReference>
<dbReference type="GO" id="GO:0003723">
    <property type="term" value="F:RNA binding"/>
    <property type="evidence" value="ECO:0007669"/>
    <property type="project" value="UniProtKB-KW"/>
</dbReference>
<dbReference type="GO" id="GO:0006397">
    <property type="term" value="P:mRNA processing"/>
    <property type="evidence" value="ECO:0007669"/>
    <property type="project" value="UniProtKB-KW"/>
</dbReference>
<dbReference type="GO" id="GO:0008380">
    <property type="term" value="P:RNA splicing"/>
    <property type="evidence" value="ECO:0007669"/>
    <property type="project" value="UniProtKB-UniRule"/>
</dbReference>
<dbReference type="GO" id="GO:0008033">
    <property type="term" value="P:tRNA processing"/>
    <property type="evidence" value="ECO:0007669"/>
    <property type="project" value="UniProtKB-KW"/>
</dbReference>
<dbReference type="HAMAP" id="MF_01390">
    <property type="entry name" value="MatK"/>
    <property type="match status" value="1"/>
</dbReference>
<dbReference type="InterPro" id="IPR024937">
    <property type="entry name" value="Domain_X"/>
</dbReference>
<dbReference type="InterPro" id="IPR002866">
    <property type="entry name" value="Maturase_MatK"/>
</dbReference>
<dbReference type="InterPro" id="IPR024942">
    <property type="entry name" value="Maturase_MatK_N"/>
</dbReference>
<dbReference type="PANTHER" id="PTHR34811">
    <property type="entry name" value="MATURASE K"/>
    <property type="match status" value="1"/>
</dbReference>
<dbReference type="PANTHER" id="PTHR34811:SF1">
    <property type="entry name" value="MATURASE K"/>
    <property type="match status" value="1"/>
</dbReference>
<dbReference type="Pfam" id="PF01348">
    <property type="entry name" value="Intron_maturas2"/>
    <property type="match status" value="1"/>
</dbReference>
<dbReference type="Pfam" id="PF01824">
    <property type="entry name" value="MatK_N"/>
    <property type="match status" value="1"/>
</dbReference>
<name>MATK_ROSFO</name>
<geneLocation type="chloroplast"/>
<proteinExistence type="inferred from homology"/>